<dbReference type="EC" id="2.8.1.6" evidence="1"/>
<dbReference type="EMBL" id="AE003852">
    <property type="protein sequence ID" value="AAF94271.1"/>
    <property type="molecule type" value="Genomic_DNA"/>
</dbReference>
<dbReference type="PIR" id="H82238">
    <property type="entry name" value="H82238"/>
</dbReference>
<dbReference type="RefSeq" id="NP_230757.1">
    <property type="nucleotide sequence ID" value="NC_002505.1"/>
</dbReference>
<dbReference type="RefSeq" id="WP_000453785.1">
    <property type="nucleotide sequence ID" value="NZ_LT906614.1"/>
</dbReference>
<dbReference type="SMR" id="Q9KSZ4"/>
<dbReference type="STRING" id="243277.VC_1112"/>
<dbReference type="DNASU" id="2614382"/>
<dbReference type="EnsemblBacteria" id="AAF94271">
    <property type="protein sequence ID" value="AAF94271"/>
    <property type="gene ID" value="VC_1112"/>
</dbReference>
<dbReference type="GeneID" id="94014122"/>
<dbReference type="KEGG" id="vch:VC_1112"/>
<dbReference type="PATRIC" id="fig|243277.26.peg.1061"/>
<dbReference type="eggNOG" id="COG0502">
    <property type="taxonomic scope" value="Bacteria"/>
</dbReference>
<dbReference type="HOGENOM" id="CLU_033172_1_2_6"/>
<dbReference type="UniPathway" id="UPA00078">
    <property type="reaction ID" value="UER00162"/>
</dbReference>
<dbReference type="Proteomes" id="UP000000584">
    <property type="component" value="Chromosome 1"/>
</dbReference>
<dbReference type="GO" id="GO:0051537">
    <property type="term" value="F:2 iron, 2 sulfur cluster binding"/>
    <property type="evidence" value="ECO:0000318"/>
    <property type="project" value="GO_Central"/>
</dbReference>
<dbReference type="GO" id="GO:0051539">
    <property type="term" value="F:4 iron, 4 sulfur cluster binding"/>
    <property type="evidence" value="ECO:0007669"/>
    <property type="project" value="UniProtKB-KW"/>
</dbReference>
<dbReference type="GO" id="GO:0004076">
    <property type="term" value="F:biotin synthase activity"/>
    <property type="evidence" value="ECO:0000318"/>
    <property type="project" value="GO_Central"/>
</dbReference>
<dbReference type="GO" id="GO:0005506">
    <property type="term" value="F:iron ion binding"/>
    <property type="evidence" value="ECO:0007669"/>
    <property type="project" value="UniProtKB-UniRule"/>
</dbReference>
<dbReference type="GO" id="GO:0009102">
    <property type="term" value="P:biotin biosynthetic process"/>
    <property type="evidence" value="ECO:0000318"/>
    <property type="project" value="GO_Central"/>
</dbReference>
<dbReference type="CDD" id="cd01335">
    <property type="entry name" value="Radical_SAM"/>
    <property type="match status" value="1"/>
</dbReference>
<dbReference type="FunFam" id="3.20.20.70:FF:000011">
    <property type="entry name" value="Biotin synthase"/>
    <property type="match status" value="1"/>
</dbReference>
<dbReference type="Gene3D" id="3.20.20.70">
    <property type="entry name" value="Aldolase class I"/>
    <property type="match status" value="1"/>
</dbReference>
<dbReference type="HAMAP" id="MF_01694">
    <property type="entry name" value="BioB"/>
    <property type="match status" value="1"/>
</dbReference>
<dbReference type="InterPro" id="IPR013785">
    <property type="entry name" value="Aldolase_TIM"/>
</dbReference>
<dbReference type="InterPro" id="IPR010722">
    <property type="entry name" value="BATS_dom"/>
</dbReference>
<dbReference type="InterPro" id="IPR002684">
    <property type="entry name" value="Biotin_synth/BioAB"/>
</dbReference>
<dbReference type="InterPro" id="IPR024177">
    <property type="entry name" value="Biotin_synthase"/>
</dbReference>
<dbReference type="InterPro" id="IPR006638">
    <property type="entry name" value="Elp3/MiaA/NifB-like_rSAM"/>
</dbReference>
<dbReference type="InterPro" id="IPR007197">
    <property type="entry name" value="rSAM"/>
</dbReference>
<dbReference type="NCBIfam" id="TIGR00433">
    <property type="entry name" value="bioB"/>
    <property type="match status" value="1"/>
</dbReference>
<dbReference type="PANTHER" id="PTHR22976">
    <property type="entry name" value="BIOTIN SYNTHASE"/>
    <property type="match status" value="1"/>
</dbReference>
<dbReference type="PANTHER" id="PTHR22976:SF2">
    <property type="entry name" value="BIOTIN SYNTHASE, MITOCHONDRIAL"/>
    <property type="match status" value="1"/>
</dbReference>
<dbReference type="Pfam" id="PF06968">
    <property type="entry name" value="BATS"/>
    <property type="match status" value="1"/>
</dbReference>
<dbReference type="Pfam" id="PF04055">
    <property type="entry name" value="Radical_SAM"/>
    <property type="match status" value="1"/>
</dbReference>
<dbReference type="PIRSF" id="PIRSF001619">
    <property type="entry name" value="Biotin_synth"/>
    <property type="match status" value="1"/>
</dbReference>
<dbReference type="SFLD" id="SFLDF00272">
    <property type="entry name" value="biotin_synthase"/>
    <property type="match status" value="1"/>
</dbReference>
<dbReference type="SFLD" id="SFLDS00029">
    <property type="entry name" value="Radical_SAM"/>
    <property type="match status" value="1"/>
</dbReference>
<dbReference type="SMART" id="SM00876">
    <property type="entry name" value="BATS"/>
    <property type="match status" value="1"/>
</dbReference>
<dbReference type="SMART" id="SM00729">
    <property type="entry name" value="Elp3"/>
    <property type="match status" value="1"/>
</dbReference>
<dbReference type="SUPFAM" id="SSF102114">
    <property type="entry name" value="Radical SAM enzymes"/>
    <property type="match status" value="1"/>
</dbReference>
<dbReference type="PROSITE" id="PS51918">
    <property type="entry name" value="RADICAL_SAM"/>
    <property type="match status" value="1"/>
</dbReference>
<comment type="function">
    <text evidence="1">Catalyzes the conversion of dethiobiotin (DTB) to biotin by the insertion of a sulfur atom into dethiobiotin via a radical-based mechanism.</text>
</comment>
<comment type="catalytic activity">
    <reaction evidence="1">
        <text>(4R,5S)-dethiobiotin + (sulfur carrier)-SH + 2 reduced [2Fe-2S]-[ferredoxin] + 2 S-adenosyl-L-methionine = (sulfur carrier)-H + biotin + 2 5'-deoxyadenosine + 2 L-methionine + 2 oxidized [2Fe-2S]-[ferredoxin]</text>
        <dbReference type="Rhea" id="RHEA:22060"/>
        <dbReference type="Rhea" id="RHEA-COMP:10000"/>
        <dbReference type="Rhea" id="RHEA-COMP:10001"/>
        <dbReference type="Rhea" id="RHEA-COMP:14737"/>
        <dbReference type="Rhea" id="RHEA-COMP:14739"/>
        <dbReference type="ChEBI" id="CHEBI:17319"/>
        <dbReference type="ChEBI" id="CHEBI:29917"/>
        <dbReference type="ChEBI" id="CHEBI:33737"/>
        <dbReference type="ChEBI" id="CHEBI:33738"/>
        <dbReference type="ChEBI" id="CHEBI:57586"/>
        <dbReference type="ChEBI" id="CHEBI:57844"/>
        <dbReference type="ChEBI" id="CHEBI:59789"/>
        <dbReference type="ChEBI" id="CHEBI:64428"/>
        <dbReference type="ChEBI" id="CHEBI:149473"/>
        <dbReference type="EC" id="2.8.1.6"/>
    </reaction>
</comment>
<comment type="cofactor">
    <cofactor evidence="1">
        <name>[4Fe-4S] cluster</name>
        <dbReference type="ChEBI" id="CHEBI:49883"/>
    </cofactor>
    <text evidence="1">Binds 1 [4Fe-4S] cluster. The cluster is coordinated with 3 cysteines and an exchangeable S-adenosyl-L-methionine.</text>
</comment>
<comment type="cofactor">
    <cofactor evidence="1">
        <name>[2Fe-2S] cluster</name>
        <dbReference type="ChEBI" id="CHEBI:190135"/>
    </cofactor>
    <text evidence="1">Binds 1 [2Fe-2S] cluster. The cluster is coordinated with 3 cysteines and 1 arginine.</text>
</comment>
<comment type="pathway">
    <text evidence="1">Cofactor biosynthesis; biotin biosynthesis; biotin from 7,8-diaminononanoate: step 2/2.</text>
</comment>
<comment type="subunit">
    <text evidence="1">Homodimer.</text>
</comment>
<comment type="similarity">
    <text evidence="1">Belongs to the radical SAM superfamily. Biotin synthase family.</text>
</comment>
<protein>
    <recommendedName>
        <fullName evidence="1">Biotin synthase</fullName>
        <ecNumber evidence="1">2.8.1.6</ecNumber>
    </recommendedName>
</protein>
<accession>Q9KSZ4</accession>
<organism>
    <name type="scientific">Vibrio cholerae serotype O1 (strain ATCC 39315 / El Tor Inaba N16961)</name>
    <dbReference type="NCBI Taxonomy" id="243277"/>
    <lineage>
        <taxon>Bacteria</taxon>
        <taxon>Pseudomonadati</taxon>
        <taxon>Pseudomonadota</taxon>
        <taxon>Gammaproteobacteria</taxon>
        <taxon>Vibrionales</taxon>
        <taxon>Vibrionaceae</taxon>
        <taxon>Vibrio</taxon>
    </lineage>
</organism>
<name>BIOB_VIBCH</name>
<sequence>MEVRHNWTVAEVKALLDKPFMDLLFEAQQVHRLHHPHNHVQVSTLLSIKTGACPEDCKYCPQSAHYRTDVDKERLMEVERVLDAAQKAKNSGSTRFCMGAAWKNPKERDMPLLKEMIRGVKDMGLETCMTLGMLTPDQAQQLAQAGLDYYNHNLDTSPEFYGNIITTRTYQDRLDTLSHVRDAGMKICSGGIIGMGESTNDRAGLLVELANLPTHPESVPINMLVKVKGTPLEQVDDVEPFDFVRLIAVARIMMPKSAVRLSAGREKMNEQMQALCFMAGANSIFYGCKLLTTPNPAEDSDMLLFKKLGINREQVAQKPDEITENELLDRVVERVAARPTASDLFYDAAL</sequence>
<gene>
    <name evidence="1" type="primary">bioB</name>
    <name type="ordered locus">VC_1112</name>
</gene>
<proteinExistence type="inferred from homology"/>
<reference key="1">
    <citation type="journal article" date="2000" name="Nature">
        <title>DNA sequence of both chromosomes of the cholera pathogen Vibrio cholerae.</title>
        <authorList>
            <person name="Heidelberg J.F."/>
            <person name="Eisen J.A."/>
            <person name="Nelson W.C."/>
            <person name="Clayton R.A."/>
            <person name="Gwinn M.L."/>
            <person name="Dodson R.J."/>
            <person name="Haft D.H."/>
            <person name="Hickey E.K."/>
            <person name="Peterson J.D."/>
            <person name="Umayam L.A."/>
            <person name="Gill S.R."/>
            <person name="Nelson K.E."/>
            <person name="Read T.D."/>
            <person name="Tettelin H."/>
            <person name="Richardson D.L."/>
            <person name="Ermolaeva M.D."/>
            <person name="Vamathevan J.J."/>
            <person name="Bass S."/>
            <person name="Qin H."/>
            <person name="Dragoi I."/>
            <person name="Sellers P."/>
            <person name="McDonald L.A."/>
            <person name="Utterback T.R."/>
            <person name="Fleischmann R.D."/>
            <person name="Nierman W.C."/>
            <person name="White O."/>
            <person name="Salzberg S.L."/>
            <person name="Smith H.O."/>
            <person name="Colwell R.R."/>
            <person name="Mekalanos J.J."/>
            <person name="Venter J.C."/>
            <person name="Fraser C.M."/>
        </authorList>
    </citation>
    <scope>NUCLEOTIDE SEQUENCE [LARGE SCALE GENOMIC DNA]</scope>
    <source>
        <strain>ATCC 39315 / El Tor Inaba N16961</strain>
    </source>
</reference>
<keyword id="KW-0001">2Fe-2S</keyword>
<keyword id="KW-0004">4Fe-4S</keyword>
<keyword id="KW-0093">Biotin biosynthesis</keyword>
<keyword id="KW-0408">Iron</keyword>
<keyword id="KW-0411">Iron-sulfur</keyword>
<keyword id="KW-0479">Metal-binding</keyword>
<keyword id="KW-1185">Reference proteome</keyword>
<keyword id="KW-0949">S-adenosyl-L-methionine</keyword>
<keyword id="KW-0808">Transferase</keyword>
<feature type="chain" id="PRO_0000381696" description="Biotin synthase">
    <location>
        <begin position="1"/>
        <end position="350"/>
    </location>
</feature>
<feature type="domain" description="Radical SAM core" evidence="2">
    <location>
        <begin position="38"/>
        <end position="256"/>
    </location>
</feature>
<feature type="binding site" evidence="1">
    <location>
        <position position="53"/>
    </location>
    <ligand>
        <name>[4Fe-4S] cluster</name>
        <dbReference type="ChEBI" id="CHEBI:49883"/>
        <note>4Fe-4S-S-AdoMet</note>
    </ligand>
</feature>
<feature type="binding site" evidence="1">
    <location>
        <position position="57"/>
    </location>
    <ligand>
        <name>[4Fe-4S] cluster</name>
        <dbReference type="ChEBI" id="CHEBI:49883"/>
        <note>4Fe-4S-S-AdoMet</note>
    </ligand>
</feature>
<feature type="binding site" evidence="1">
    <location>
        <position position="60"/>
    </location>
    <ligand>
        <name>[4Fe-4S] cluster</name>
        <dbReference type="ChEBI" id="CHEBI:49883"/>
        <note>4Fe-4S-S-AdoMet</note>
    </ligand>
</feature>
<feature type="binding site" evidence="1">
    <location>
        <position position="97"/>
    </location>
    <ligand>
        <name>[2Fe-2S] cluster</name>
        <dbReference type="ChEBI" id="CHEBI:190135"/>
    </ligand>
</feature>
<feature type="binding site" evidence="1">
    <location>
        <position position="128"/>
    </location>
    <ligand>
        <name>[2Fe-2S] cluster</name>
        <dbReference type="ChEBI" id="CHEBI:190135"/>
    </ligand>
</feature>
<feature type="binding site" evidence="1">
    <location>
        <position position="188"/>
    </location>
    <ligand>
        <name>[2Fe-2S] cluster</name>
        <dbReference type="ChEBI" id="CHEBI:190135"/>
    </ligand>
</feature>
<feature type="binding site" evidence="1">
    <location>
        <position position="260"/>
    </location>
    <ligand>
        <name>[2Fe-2S] cluster</name>
        <dbReference type="ChEBI" id="CHEBI:190135"/>
    </ligand>
</feature>
<evidence type="ECO:0000255" key="1">
    <source>
        <dbReference type="HAMAP-Rule" id="MF_01694"/>
    </source>
</evidence>
<evidence type="ECO:0000255" key="2">
    <source>
        <dbReference type="PROSITE-ProRule" id="PRU01266"/>
    </source>
</evidence>